<evidence type="ECO:0000255" key="1">
    <source>
        <dbReference type="HAMAP-Rule" id="MF_01835"/>
    </source>
</evidence>
<feature type="chain" id="PRO_1000188345" description="Circadian clock oscillator protein KaiB">
    <location>
        <begin position="1"/>
        <end position="105"/>
    </location>
</feature>
<keyword id="KW-0090">Biological rhythms</keyword>
<proteinExistence type="inferred from homology"/>
<reference key="1">
    <citation type="journal article" date="2011" name="MBio">
        <title>Novel metabolic attributes of the genus Cyanothece, comprising a group of unicellular nitrogen-fixing Cyanobacteria.</title>
        <authorList>
            <person name="Bandyopadhyay A."/>
            <person name="Elvitigala T."/>
            <person name="Welsh E."/>
            <person name="Stockel J."/>
            <person name="Liberton M."/>
            <person name="Min H."/>
            <person name="Sherman L.A."/>
            <person name="Pakrasi H.B."/>
        </authorList>
    </citation>
    <scope>NUCLEOTIDE SEQUENCE [LARGE SCALE GENOMIC DNA]</scope>
    <source>
        <strain>PCC 7425 / ATCC 29141</strain>
    </source>
</reference>
<comment type="function">
    <text evidence="1">Key component of the KaiABC oscillator complex, which constitutes the main circadian regulator in cyanobacteria. Complex composition changes during the circadian cycle to control KaiC phosphorylation. KaiA stimulates KaiC autophosphorylation, while KaiB sequesters KaiA, leading to KaiC autodephosphorylation. Phospho-Ser-431 KaiC accumulation triggers binding of KaiB to form the KaiB(6):KaiC(6) complex, leading to changes in output regulators CikA and SasA. KaiB switches to a thioredoxin-like fold (KaiB(fs)) when bound to KaiC. KaiB(6):KaiC(6) formation exposes a site for KaiA binding that sequesters KaiA from KaiC, making the KaiC(6):KaiB(6):KaiA(12) complex that results in KaiC autodephosphorylation.</text>
</comment>
<comment type="function">
    <text evidence="1">A metamorphic protein which reversibly switches between an inactive tetrameric fold and a rare, thioredoxin-like monomeric fold (KaiB(fs)). KaiB(fs) binds phospho-KaiC, KaiA and CikA. KaiA and CikA compete for binding to KaiB(fs), and KaiB(fs) and SasA compete for binding to KaiC, thus the clock oscillator and output signal pathway are tightly coupled.</text>
</comment>
<comment type="subunit">
    <text evidence="1">The KaiABC complex composition changes during the circadian cycle to control KaiC phosphorylation. Complexes KaiC(6), KaiA(2-4):KaiC(6), KaiB(6):KaiC(6) and KaiC(6):KaiB(6):KaiA(12) are among the most important forms, many form cooperatively. Undergoes a major conformational rearrangment; in the free state forms homotetramers as a dimer of dimers. When bound to the CI domain of KaiC switches to a monomeric thioredoxin-fold (KaiB(fs)). KaiB(fs) binds CikA, leading it to dephosphorylate phospho-RpaA.</text>
</comment>
<comment type="domain">
    <text evidence="1">Has 2 forms, fold switches to a thioredoxin-like fold (KaiB(fs)) when bound to KaiC.</text>
</comment>
<comment type="similarity">
    <text evidence="1">Belongs to the KaiB family.</text>
</comment>
<gene>
    <name evidence="1" type="primary">kaiB</name>
    <name type="ordered locus">Cyan7425_0347</name>
</gene>
<accession>B8HSU2</accession>
<protein>
    <recommendedName>
        <fullName evidence="1">Circadian clock oscillator protein KaiB</fullName>
    </recommendedName>
</protein>
<sequence length="105" mass="11692">MSPLKKTYVLKLYVAGNTPNSVRALKTLNNILEQEFQGVYALKVIDVLKNPQLAEEDKILATPTLAKILPPPVRKIIGDLSDREKVLIGLDLLYEEFAEAEAEAE</sequence>
<dbReference type="EMBL" id="CP001344">
    <property type="protein sequence ID" value="ACL42739.1"/>
    <property type="molecule type" value="Genomic_DNA"/>
</dbReference>
<dbReference type="SMR" id="B8HSU2"/>
<dbReference type="STRING" id="395961.Cyan7425_0347"/>
<dbReference type="KEGG" id="cyn:Cyan7425_0347"/>
<dbReference type="eggNOG" id="COG4251">
    <property type="taxonomic scope" value="Bacteria"/>
</dbReference>
<dbReference type="HOGENOM" id="CLU_144073_0_0_3"/>
<dbReference type="OrthoDB" id="5458519at2"/>
<dbReference type="GO" id="GO:0007623">
    <property type="term" value="P:circadian rhythm"/>
    <property type="evidence" value="ECO:0007669"/>
    <property type="project" value="UniProtKB-UniRule"/>
</dbReference>
<dbReference type="CDD" id="cd02978">
    <property type="entry name" value="KaiB_like"/>
    <property type="match status" value="1"/>
</dbReference>
<dbReference type="FunFam" id="3.40.30.10:FF:000180">
    <property type="entry name" value="Circadian clock protein KaiB"/>
    <property type="match status" value="1"/>
</dbReference>
<dbReference type="Gene3D" id="3.40.30.10">
    <property type="entry name" value="Glutaredoxin"/>
    <property type="match status" value="1"/>
</dbReference>
<dbReference type="HAMAP" id="MF_01835">
    <property type="entry name" value="KaiB"/>
    <property type="match status" value="1"/>
</dbReference>
<dbReference type="InterPro" id="IPR013474">
    <property type="entry name" value="Circ_KaiB"/>
</dbReference>
<dbReference type="InterPro" id="IPR039022">
    <property type="entry name" value="KaiB-like"/>
</dbReference>
<dbReference type="InterPro" id="IPR011649">
    <property type="entry name" value="KaiB_domain"/>
</dbReference>
<dbReference type="InterPro" id="IPR036249">
    <property type="entry name" value="Thioredoxin-like_sf"/>
</dbReference>
<dbReference type="NCBIfam" id="TIGR02654">
    <property type="entry name" value="circ_KaiB"/>
    <property type="match status" value="1"/>
</dbReference>
<dbReference type="NCBIfam" id="NF006798">
    <property type="entry name" value="PRK09301.1"/>
    <property type="match status" value="1"/>
</dbReference>
<dbReference type="PANTHER" id="PTHR41709:SF2">
    <property type="entry name" value="CIRCADIAN CLOCK PROTEIN KAIB2"/>
    <property type="match status" value="1"/>
</dbReference>
<dbReference type="PANTHER" id="PTHR41709">
    <property type="entry name" value="KAIB-LIKE PROTEIN 1"/>
    <property type="match status" value="1"/>
</dbReference>
<dbReference type="Pfam" id="PF07689">
    <property type="entry name" value="KaiB"/>
    <property type="match status" value="1"/>
</dbReference>
<dbReference type="SMART" id="SM01248">
    <property type="entry name" value="KaiB"/>
    <property type="match status" value="1"/>
</dbReference>
<dbReference type="SUPFAM" id="SSF52833">
    <property type="entry name" value="Thioredoxin-like"/>
    <property type="match status" value="1"/>
</dbReference>
<organism>
    <name type="scientific">Cyanothece sp. (strain PCC 7425 / ATCC 29141)</name>
    <dbReference type="NCBI Taxonomy" id="395961"/>
    <lineage>
        <taxon>Bacteria</taxon>
        <taxon>Bacillati</taxon>
        <taxon>Cyanobacteriota</taxon>
        <taxon>Cyanophyceae</taxon>
        <taxon>Gomontiellales</taxon>
        <taxon>Cyanothecaceae</taxon>
        <taxon>Cyanothece</taxon>
    </lineage>
</organism>
<name>KAIB_CYAP4</name>